<dbReference type="PDB" id="2DCV">
    <property type="method" value="NMR"/>
    <property type="chains" value="A=1-42"/>
</dbReference>
<dbReference type="PDBsum" id="2DCV"/>
<dbReference type="BMRB" id="P0C1Z8"/>
<dbReference type="SMR" id="P0C1Z8"/>
<dbReference type="TCDB" id="8.B.6.1.8">
    <property type="family name" value="the ca(2+) channel-targeting spider toxin (cst) family"/>
</dbReference>
<dbReference type="EvolutionaryTrace" id="P0C1Z8"/>
<dbReference type="GO" id="GO:0005576">
    <property type="term" value="C:extracellular region"/>
    <property type="evidence" value="ECO:0007669"/>
    <property type="project" value="UniProtKB-SubCell"/>
</dbReference>
<dbReference type="GO" id="GO:0042742">
    <property type="term" value="P:defense response to bacterium"/>
    <property type="evidence" value="ECO:0007669"/>
    <property type="project" value="UniProtKB-KW"/>
</dbReference>
<dbReference type="GO" id="GO:0050832">
    <property type="term" value="P:defense response to fungus"/>
    <property type="evidence" value="ECO:0007669"/>
    <property type="project" value="UniProtKB-KW"/>
</dbReference>
<dbReference type="GO" id="GO:0031640">
    <property type="term" value="P:killing of cells of another organism"/>
    <property type="evidence" value="ECO:0007669"/>
    <property type="project" value="UniProtKB-KW"/>
</dbReference>
<dbReference type="Gene3D" id="4.10.40.20">
    <property type="match status" value="1"/>
</dbReference>
<dbReference type="InterPro" id="IPR020957">
    <property type="entry name" value="Tachystatin_B"/>
</dbReference>
<dbReference type="Pfam" id="PF11478">
    <property type="entry name" value="Tachystatin_B"/>
    <property type="match status" value="1"/>
</dbReference>
<evidence type="ECO:0000269" key="1">
    <source>
    </source>
</evidence>
<evidence type="ECO:0000269" key="2">
    <source>
    </source>
</evidence>
<evidence type="ECO:0007829" key="3">
    <source>
        <dbReference type="PDB" id="2DCV"/>
    </source>
</evidence>
<comment type="function">
    <text>Exhibits stronger antimicrobial activity against the Gram-positive bacteria (S.aureus (IC(50) is 7.4 ug/ml)) and fungi (C.albicans (IC(50) is 3.0 ug/ml) and P.pastoris (IC(50) is 0.1 ug/ml)) than Gram-negative bacteria (E.coli no inhibition at 100 ug/ml). Binds to chitin (4.3 uM are required to obtain 50% of binding). Does not cause hemolysis on sheep erythrocytes. Has no blocking activity on the P-type calcium channel.</text>
</comment>
<comment type="subcellular location">
    <subcellularLocation>
        <location>Secreted</location>
    </subcellularLocation>
</comment>
<comment type="tissue specificity">
    <text evidence="1">Granular hemocytes, small secretory granules.</text>
</comment>
<comment type="domain">
    <text>The presence of a 'disulfide through disulfide knot' structurally defines this protein as a knottin.</text>
</comment>
<organism>
    <name type="scientific">Tachypleus tridentatus</name>
    <name type="common">Japanese horseshoe crab</name>
    <dbReference type="NCBI Taxonomy" id="6853"/>
    <lineage>
        <taxon>Eukaryota</taxon>
        <taxon>Metazoa</taxon>
        <taxon>Ecdysozoa</taxon>
        <taxon>Arthropoda</taxon>
        <taxon>Chelicerata</taxon>
        <taxon>Merostomata</taxon>
        <taxon>Xiphosura</taxon>
        <taxon>Limulidae</taxon>
        <taxon>Tachypleus</taxon>
    </lineage>
</organism>
<sequence length="42" mass="4919">YVSCLFRGARCRVYSGRSCCFGYYCRRDFPGSIFGTCSRRNF</sequence>
<accession>P0C1Z8</accession>
<feature type="peptide" id="PRO_0000256691" description="Tachystatin-B1">
    <location>
        <begin position="1"/>
        <end position="42"/>
    </location>
</feature>
<feature type="disulfide bond" evidence="2">
    <location>
        <begin position="4"/>
        <end position="20"/>
    </location>
</feature>
<feature type="disulfide bond" evidence="2">
    <location>
        <begin position="11"/>
        <end position="25"/>
    </location>
</feature>
<feature type="disulfide bond" evidence="2">
    <location>
        <begin position="19"/>
        <end position="37"/>
    </location>
</feature>
<feature type="strand" evidence="3">
    <location>
        <begin position="10"/>
        <end position="12"/>
    </location>
</feature>
<feature type="strand" evidence="3">
    <location>
        <begin position="23"/>
        <end position="29"/>
    </location>
</feature>
<feature type="strand" evidence="3">
    <location>
        <begin position="33"/>
        <end position="39"/>
    </location>
</feature>
<keyword id="KW-0002">3D-structure</keyword>
<keyword id="KW-0044">Antibiotic</keyword>
<keyword id="KW-0929">Antimicrobial</keyword>
<keyword id="KW-0903">Direct protein sequencing</keyword>
<keyword id="KW-1015">Disulfide bond</keyword>
<keyword id="KW-0295">Fungicide</keyword>
<keyword id="KW-0960">Knottin</keyword>
<keyword id="KW-0964">Secreted</keyword>
<protein>
    <recommendedName>
        <fullName>Tachystatin-B1</fullName>
    </recommendedName>
</protein>
<reference key="1">
    <citation type="journal article" date="1999" name="J. Biol. Chem.">
        <title>Horseshoe crab hemocyte-derived antimicrobial polypeptides, tachystatins, with sequence similarity to spider neurotoxins.</title>
        <authorList>
            <person name="Osaki T."/>
            <person name="Omotezako M."/>
            <person name="Nagayama R."/>
            <person name="Hirata M."/>
            <person name="Iwanaga S."/>
            <person name="Kasahara J."/>
            <person name="Hattori J."/>
            <person name="Ito I."/>
            <person name="Sugiyama H."/>
            <person name="Kawabata S."/>
        </authorList>
    </citation>
    <scope>PROTEIN SEQUENCE</scope>
    <scope>TISSUE SPECIFICITY</scope>
</reference>
<reference key="2">
    <citation type="journal article" date="2007" name="J. Pept. Sci.">
        <title>The solution structure of horseshoe crab antimicrobial peptide tachystatin B with an inhibitory cystine-knot motif.</title>
        <authorList>
            <person name="Fujitani N."/>
            <person name="Kouno T."/>
            <person name="Nakahara T."/>
            <person name="Takaya K."/>
            <person name="Osaki T."/>
            <person name="Kawabata S."/>
            <person name="Mizuguchi M."/>
            <person name="Aizawa T."/>
            <person name="Demura M."/>
            <person name="Nishimura S."/>
            <person name="Kawano K."/>
        </authorList>
    </citation>
    <scope>STRUCTURE BY NMR</scope>
    <scope>DISULFIDE BONDS</scope>
</reference>
<proteinExistence type="evidence at protein level"/>
<name>TACB1_TACTR</name>